<evidence type="ECO:0000255" key="1">
    <source>
        <dbReference type="PROSITE-ProRule" id="PRU00238"/>
    </source>
</evidence>
<organism>
    <name type="scientific">Aegypius monachus</name>
    <name type="common">Cinereous vulture</name>
    <dbReference type="NCBI Taxonomy" id="8959"/>
    <lineage>
        <taxon>Eukaryota</taxon>
        <taxon>Metazoa</taxon>
        <taxon>Chordata</taxon>
        <taxon>Craniata</taxon>
        <taxon>Vertebrata</taxon>
        <taxon>Euteleostomi</taxon>
        <taxon>Archelosauria</taxon>
        <taxon>Archosauria</taxon>
        <taxon>Dinosauria</taxon>
        <taxon>Saurischia</taxon>
        <taxon>Theropoda</taxon>
        <taxon>Coelurosauria</taxon>
        <taxon>Aves</taxon>
        <taxon>Neognathae</taxon>
        <taxon>Neoaves</taxon>
        <taxon>Telluraves</taxon>
        <taxon>Accipitrimorphae</taxon>
        <taxon>Accipitriformes</taxon>
        <taxon>Accipitridae</taxon>
        <taxon>Accipitrinae</taxon>
        <taxon>Aegypius</taxon>
    </lineage>
</organism>
<comment type="function">
    <text>Involved in oxygen transport from the lung to the various peripheral tissues.</text>
</comment>
<comment type="subunit">
    <text>Heterotetramer of two alpha chains and two beta chains.</text>
</comment>
<comment type="tissue specificity">
    <text>Red blood cells.</text>
</comment>
<comment type="similarity">
    <text evidence="1">Belongs to the globin family.</text>
</comment>
<name>HBB_AEGMO</name>
<gene>
    <name type="primary">HBB</name>
</gene>
<feature type="chain" id="PRO_0000052857" description="Hemoglobin subunit beta">
    <location>
        <begin position="1"/>
        <end position="146"/>
    </location>
</feature>
<feature type="domain" description="Globin" evidence="1">
    <location>
        <begin position="2"/>
        <end position="146"/>
    </location>
</feature>
<feature type="binding site" description="distal binding residue">
    <location>
        <position position="63"/>
    </location>
    <ligand>
        <name>heme b</name>
        <dbReference type="ChEBI" id="CHEBI:60344"/>
    </ligand>
    <ligandPart>
        <name>Fe</name>
        <dbReference type="ChEBI" id="CHEBI:18248"/>
    </ligandPart>
</feature>
<feature type="binding site" description="proximal binding residue">
    <location>
        <position position="92"/>
    </location>
    <ligand>
        <name>heme b</name>
        <dbReference type="ChEBI" id="CHEBI:60344"/>
    </ligand>
    <ligandPart>
        <name>Fe</name>
        <dbReference type="ChEBI" id="CHEBI:18248"/>
    </ligandPart>
</feature>
<sequence length="146" mass="16233">VHWTAEEKQLITGLWGKVNVADCGAEALARLLIVYPWTQRFFASFGNLSSPTAIIGNPMVRAHGKKVLTSFGEAVKNLDNIKNTFAQLSELHCDKLHVDPENFRLLGDILIIVLAAHFGKDFSPDCQAAWQKLVRAVAHALARKYH</sequence>
<reference key="1">
    <citation type="journal article" date="1987" name="Biol. Chem. Hoppe-Seyler">
        <title>High altitude respiration of birds. The primary structures of the major and minor hemoglobin component of adult European black vulture (Aegypius monachus, Aegypiinae).</title>
        <authorList>
            <person name="Hiebl I."/>
            <person name="Schneeganss D."/>
            <person name="Grimm F."/>
            <person name="Kosters J."/>
            <person name="Braunitzer G."/>
        </authorList>
    </citation>
    <scope>PROTEIN SEQUENCE</scope>
</reference>
<proteinExistence type="evidence at protein level"/>
<protein>
    <recommendedName>
        <fullName>Hemoglobin subunit beta</fullName>
    </recommendedName>
    <alternativeName>
        <fullName>Beta-globin</fullName>
    </alternativeName>
    <alternativeName>
        <fullName>Hemoglobin beta chain</fullName>
    </alternativeName>
</protein>
<accession>P68061</accession>
<accession>P07418</accession>
<dbReference type="PIR" id="C26429">
    <property type="entry name" value="C26429"/>
</dbReference>
<dbReference type="SMR" id="P68061"/>
<dbReference type="GO" id="GO:0072562">
    <property type="term" value="C:blood microparticle"/>
    <property type="evidence" value="ECO:0007669"/>
    <property type="project" value="TreeGrafter"/>
</dbReference>
<dbReference type="GO" id="GO:0031838">
    <property type="term" value="C:haptoglobin-hemoglobin complex"/>
    <property type="evidence" value="ECO:0007669"/>
    <property type="project" value="TreeGrafter"/>
</dbReference>
<dbReference type="GO" id="GO:0005833">
    <property type="term" value="C:hemoglobin complex"/>
    <property type="evidence" value="ECO:0007669"/>
    <property type="project" value="InterPro"/>
</dbReference>
<dbReference type="GO" id="GO:0031720">
    <property type="term" value="F:haptoglobin binding"/>
    <property type="evidence" value="ECO:0007669"/>
    <property type="project" value="TreeGrafter"/>
</dbReference>
<dbReference type="GO" id="GO:0020037">
    <property type="term" value="F:heme binding"/>
    <property type="evidence" value="ECO:0007669"/>
    <property type="project" value="InterPro"/>
</dbReference>
<dbReference type="GO" id="GO:0046872">
    <property type="term" value="F:metal ion binding"/>
    <property type="evidence" value="ECO:0007669"/>
    <property type="project" value="UniProtKB-KW"/>
</dbReference>
<dbReference type="GO" id="GO:0043177">
    <property type="term" value="F:organic acid binding"/>
    <property type="evidence" value="ECO:0007669"/>
    <property type="project" value="TreeGrafter"/>
</dbReference>
<dbReference type="GO" id="GO:0019825">
    <property type="term" value="F:oxygen binding"/>
    <property type="evidence" value="ECO:0007669"/>
    <property type="project" value="InterPro"/>
</dbReference>
<dbReference type="GO" id="GO:0005344">
    <property type="term" value="F:oxygen carrier activity"/>
    <property type="evidence" value="ECO:0007669"/>
    <property type="project" value="UniProtKB-KW"/>
</dbReference>
<dbReference type="GO" id="GO:0004601">
    <property type="term" value="F:peroxidase activity"/>
    <property type="evidence" value="ECO:0007669"/>
    <property type="project" value="TreeGrafter"/>
</dbReference>
<dbReference type="GO" id="GO:0042744">
    <property type="term" value="P:hydrogen peroxide catabolic process"/>
    <property type="evidence" value="ECO:0007669"/>
    <property type="project" value="TreeGrafter"/>
</dbReference>
<dbReference type="CDD" id="cd08925">
    <property type="entry name" value="Hb-beta-like"/>
    <property type="match status" value="1"/>
</dbReference>
<dbReference type="FunFam" id="1.10.490.10:FF:000001">
    <property type="entry name" value="Hemoglobin subunit beta"/>
    <property type="match status" value="1"/>
</dbReference>
<dbReference type="Gene3D" id="1.10.490.10">
    <property type="entry name" value="Globins"/>
    <property type="match status" value="1"/>
</dbReference>
<dbReference type="InterPro" id="IPR000971">
    <property type="entry name" value="Globin"/>
</dbReference>
<dbReference type="InterPro" id="IPR009050">
    <property type="entry name" value="Globin-like_sf"/>
</dbReference>
<dbReference type="InterPro" id="IPR012292">
    <property type="entry name" value="Globin/Proto"/>
</dbReference>
<dbReference type="InterPro" id="IPR002337">
    <property type="entry name" value="Hemoglobin_b"/>
</dbReference>
<dbReference type="InterPro" id="IPR050056">
    <property type="entry name" value="Hemoglobin_oxygen_transport"/>
</dbReference>
<dbReference type="PANTHER" id="PTHR11442">
    <property type="entry name" value="HEMOGLOBIN FAMILY MEMBER"/>
    <property type="match status" value="1"/>
</dbReference>
<dbReference type="PANTHER" id="PTHR11442:SF7">
    <property type="entry name" value="HEMOGLOBIN SUBUNIT EPSILON"/>
    <property type="match status" value="1"/>
</dbReference>
<dbReference type="Pfam" id="PF00042">
    <property type="entry name" value="Globin"/>
    <property type="match status" value="1"/>
</dbReference>
<dbReference type="PRINTS" id="PR00814">
    <property type="entry name" value="BETAHAEM"/>
</dbReference>
<dbReference type="SUPFAM" id="SSF46458">
    <property type="entry name" value="Globin-like"/>
    <property type="match status" value="1"/>
</dbReference>
<dbReference type="PROSITE" id="PS01033">
    <property type="entry name" value="GLOBIN"/>
    <property type="match status" value="1"/>
</dbReference>
<keyword id="KW-0903">Direct protein sequencing</keyword>
<keyword id="KW-0349">Heme</keyword>
<keyword id="KW-0408">Iron</keyword>
<keyword id="KW-0479">Metal-binding</keyword>
<keyword id="KW-0561">Oxygen transport</keyword>
<keyword id="KW-0813">Transport</keyword>